<organism>
    <name type="scientific">Epstein-Barr virus (strain GD1)</name>
    <name type="common">HHV-4</name>
    <name type="synonym">Human gammaherpesvirus 4</name>
    <dbReference type="NCBI Taxonomy" id="10376"/>
    <lineage>
        <taxon>Viruses</taxon>
        <taxon>Duplodnaviria</taxon>
        <taxon>Heunggongvirae</taxon>
        <taxon>Peploviricota</taxon>
        <taxon>Herviviricetes</taxon>
        <taxon>Herpesvirales</taxon>
        <taxon>Orthoherpesviridae</taxon>
        <taxon>Gammaherpesvirinae</taxon>
        <taxon>Lymphocryptovirus</taxon>
        <taxon>Lymphocryptovirus humangamma4</taxon>
    </lineage>
</organism>
<organismHost>
    <name type="scientific">Homo sapiens</name>
    <name type="common">Human</name>
    <dbReference type="NCBI Taxonomy" id="9606"/>
</organismHost>
<accession>P0C732</accession>
<name>EBNA5_EBVG</name>
<proteinExistence type="inferred from homology"/>
<evidence type="ECO:0000250" key="1"/>
<evidence type="ECO:0000256" key="2">
    <source>
        <dbReference type="SAM" id="MobiDB-lite"/>
    </source>
</evidence>
<evidence type="ECO:0000305" key="3"/>
<gene>
    <name type="primary">EBNA-LP</name>
    <name type="synonym">EBNA5</name>
</gene>
<feature type="chain" id="PRO_0000376062" description="Epstein-Barr nuclear antigen leader protein">
    <location>
        <begin position="1"/>
        <end position="506"/>
    </location>
</feature>
<feature type="region of interest" description="Disordered" evidence="2">
    <location>
        <begin position="1"/>
        <end position="470"/>
    </location>
</feature>
<feature type="region of interest" description="Disordered" evidence="2">
    <location>
        <begin position="485"/>
        <end position="506"/>
    </location>
</feature>
<feature type="modified residue" description="Phosphoserine; by host" evidence="1">
    <location>
        <position position="35"/>
    </location>
</feature>
<dbReference type="EMBL" id="AY961628">
    <property type="status" value="NOT_ANNOTATED_CDS"/>
    <property type="molecule type" value="Genomic_DNA"/>
</dbReference>
<dbReference type="RefSeq" id="YP_401636.1">
    <property type="nucleotide sequence ID" value="NC_007605.1"/>
</dbReference>
<dbReference type="SMR" id="P0C732"/>
<dbReference type="BioGRID" id="971788">
    <property type="interactions" value="154"/>
</dbReference>
<dbReference type="IntAct" id="P0C732">
    <property type="interactions" value="1"/>
</dbReference>
<dbReference type="DNASU" id="3783746"/>
<dbReference type="GeneID" id="3783746"/>
<dbReference type="KEGG" id="vg:3783746"/>
<dbReference type="Proteomes" id="UP000007641">
    <property type="component" value="Genome"/>
</dbReference>
<dbReference type="GO" id="GO:0042025">
    <property type="term" value="C:host cell nucleus"/>
    <property type="evidence" value="ECO:0007669"/>
    <property type="project" value="UniProtKB-SubCell"/>
</dbReference>
<dbReference type="InterPro" id="IPR005030">
    <property type="entry name" value="Herpes_LP"/>
</dbReference>
<dbReference type="Pfam" id="PF03363">
    <property type="entry name" value="Herpes_LP"/>
    <property type="match status" value="6"/>
</dbReference>
<sequence length="506" mass="54739">MGDRSEGPGPTRPGPPGIGPEGPLGQLLRRHRSPSPTRGGQEPRRVRRRVLVQQEEEVVSGSPSGPRGDRSEGPGPTRPGPPGIGPEGPLGQLLRRHRSPSPTRGGQEPRRVRRRVLVQQEEEVVSGSPSGPRGDRSEGPGPTRPGPPGIGPEGPLGQLLRRHRSPSPTRGGQEPRRVRRRVLVQQEEEVVSGSPSGPRGDRSEGPGPTRPGPPGIGPEGPLGQLLRRHRSPSPTRGGQEPRRVRRRVLVQQEEEVVSGSPSGPRGDRSEGPGPTRPGPPGIGPEGPLGQLLRRHRSPSPTRGGQEPRRVRRRVLVQQEEEVVSGSPSGPRGDRSEGPGPTRPGPPGIGPEGPLGQLLRRHRSPSPTRGGQEPRRVRRRVLVQQEEEVVSGSPSGPRGDRSEGPGPTRPGPPGIGPEGPLGQLLRRHRSPSPTRGGQEPRRVRRRVLVQQEEEVVSGSPSGPLRPRPRPPARSLREWLLRIRDHFEPPTVTTQRQSVYIEEEEDED</sequence>
<reference key="1">
    <citation type="journal article" date="2005" name="J. Virol.">
        <title>Genomic sequence analysis of Epstein-Barr virus strain GD1 from a nasopharyngeal carcinoma patient.</title>
        <authorList>
            <person name="Zeng M.-S."/>
            <person name="Li D.-J."/>
            <person name="Liu Q.-L."/>
            <person name="Song L.-B."/>
            <person name="Li M.-Z."/>
            <person name="Zhang R.-H."/>
            <person name="Yu X.-J."/>
            <person name="Wang H.-M."/>
            <person name="Ernberg I."/>
            <person name="Zeng Y.-X."/>
        </authorList>
    </citation>
    <scope>NUCLEOTIDE SEQUENCE [LARGE SCALE GENOMIC DNA]</scope>
</reference>
<protein>
    <recommendedName>
        <fullName>Epstein-Barr nuclear antigen leader protein</fullName>
        <shortName>EBNA-LP</shortName>
        <shortName>EBV nuclear antigen leader protein</shortName>
    </recommendedName>
    <alternativeName>
        <fullName>Epstein-Barr nuclear antigen 5</fullName>
        <shortName>EBNA-5</shortName>
        <shortName>EBV nuclear antigen 5</shortName>
    </alternativeName>
</protein>
<keyword id="KW-0010">Activator</keyword>
<keyword id="KW-1048">Host nucleus</keyword>
<keyword id="KW-0945">Host-virus interaction</keyword>
<keyword id="KW-0597">Phosphoprotein</keyword>
<keyword id="KW-0804">Transcription</keyword>
<keyword id="KW-0805">Transcription regulation</keyword>
<comment type="function">
    <text evidence="1">Plays an important role in the establishment of B-cell immortalization by acting as an EBNA2 coactivator. This transcriptional activation preferentially enhances the expression of the major viral protein LMP1. The interaction between EBNA-LP and host SP100 correlates with coactivation of EBNA2 and the relocalization of SP100 from PML nuclear bodies into nucleoplasm (By similarity).</text>
</comment>
<comment type="subunit">
    <text evidence="1">Homooligomer. Interacts with host SP100; this interaction is important for EBNA-LP coactivator activity. Interacts with host HAX1, ERR1 and HSPA2. Interacts with host PRKDC and AKAP8L; these interactions modulate the coactivator function of EBNA-LP (By similarity).</text>
</comment>
<comment type="subcellular location">
    <subcellularLocation>
        <location evidence="1">Host nucleus</location>
    </subcellularLocation>
</comment>
<comment type="PTM">
    <text evidence="1">Phosphorylated by the cellular protein kinase cdc2.</text>
</comment>
<comment type="similarity">
    <text evidence="3">Belongs to the lymphocryptovirus EBNA-LP family.</text>
</comment>